<gene>
    <name type="ordered locus">RF_0939</name>
</gene>
<name>Y939_RICFE</name>
<reference key="1">
    <citation type="journal article" date="2005" name="PLoS Biol.">
        <title>The genome sequence of Rickettsia felis identifies the first putative conjugative plasmid in an obligate intracellular parasite.</title>
        <authorList>
            <person name="Ogata H."/>
            <person name="Renesto P."/>
            <person name="Audic S."/>
            <person name="Robert C."/>
            <person name="Blanc G."/>
            <person name="Fournier P.-E."/>
            <person name="Parinello H."/>
            <person name="Claverie J.-M."/>
            <person name="Raoult D."/>
        </authorList>
    </citation>
    <scope>NUCLEOTIDE SEQUENCE [LARGE SCALE GENOMIC DNA]</scope>
    <source>
        <strain>ATCC VR-1525 / URRWXCal2</strain>
    </source>
</reference>
<sequence>MTQLLNRSLIMLLKSNIIVQDVQSYVVQFGFEAILKEAISFDKVDVVKSLNKLRAVSTTELFLASSNNALKVAEWLVETKKANVNMCSEIFKDTPLNSAARHGSYKVAEYLIAKGAAVNGYEGALLGPPLYEAVSGKYLNVAKLLLEKGAAVDQRKSGETPLHAVAKNVRYTSKDIKDDEIYKLLVSYGADTNAKVEFRRVGFSIYDGKTVSEIAEFKVALAGESE</sequence>
<feature type="chain" id="PRO_0000281755" description="Putative ankyrin repeat protein RF_0939">
    <location>
        <begin position="1"/>
        <end position="226"/>
    </location>
</feature>
<feature type="repeat" description="ANK 1">
    <location>
        <begin position="56"/>
        <end position="86"/>
    </location>
</feature>
<feature type="repeat" description="ANK 2">
    <location>
        <begin position="91"/>
        <end position="120"/>
    </location>
</feature>
<feature type="repeat" description="ANK 3">
    <location>
        <begin position="125"/>
        <end position="154"/>
    </location>
</feature>
<feature type="repeat" description="ANK 4">
    <location>
        <begin position="157"/>
        <end position="194"/>
    </location>
</feature>
<proteinExistence type="predicted"/>
<dbReference type="EMBL" id="CP000053">
    <property type="protein sequence ID" value="AAY61790.1"/>
    <property type="molecule type" value="Genomic_DNA"/>
</dbReference>
<dbReference type="SMR" id="Q4UKY3"/>
<dbReference type="STRING" id="315456.RF_0939"/>
<dbReference type="KEGG" id="rfe:RF_0939"/>
<dbReference type="eggNOG" id="COG0666">
    <property type="taxonomic scope" value="Bacteria"/>
</dbReference>
<dbReference type="HOGENOM" id="CLU_1223969_0_0_5"/>
<dbReference type="OrthoDB" id="7161756at2"/>
<dbReference type="Proteomes" id="UP000008548">
    <property type="component" value="Chromosome"/>
</dbReference>
<dbReference type="GO" id="GO:0000151">
    <property type="term" value="C:ubiquitin ligase complex"/>
    <property type="evidence" value="ECO:0007669"/>
    <property type="project" value="TreeGrafter"/>
</dbReference>
<dbReference type="GO" id="GO:0006511">
    <property type="term" value="P:ubiquitin-dependent protein catabolic process"/>
    <property type="evidence" value="ECO:0007669"/>
    <property type="project" value="TreeGrafter"/>
</dbReference>
<dbReference type="Gene3D" id="1.25.40.20">
    <property type="entry name" value="Ankyrin repeat-containing domain"/>
    <property type="match status" value="1"/>
</dbReference>
<dbReference type="InterPro" id="IPR002110">
    <property type="entry name" value="Ankyrin_rpt"/>
</dbReference>
<dbReference type="InterPro" id="IPR036770">
    <property type="entry name" value="Ankyrin_rpt-contain_sf"/>
</dbReference>
<dbReference type="PANTHER" id="PTHR24173:SF27">
    <property type="entry name" value="ANKYRIN REPEAT AND SOCS BOX PROTEIN 1"/>
    <property type="match status" value="1"/>
</dbReference>
<dbReference type="PANTHER" id="PTHR24173">
    <property type="entry name" value="ANKYRIN REPEAT CONTAINING"/>
    <property type="match status" value="1"/>
</dbReference>
<dbReference type="Pfam" id="PF12796">
    <property type="entry name" value="Ank_2"/>
    <property type="match status" value="2"/>
</dbReference>
<dbReference type="PRINTS" id="PR01415">
    <property type="entry name" value="ANKYRIN"/>
</dbReference>
<dbReference type="SMART" id="SM00248">
    <property type="entry name" value="ANK"/>
    <property type="match status" value="4"/>
</dbReference>
<dbReference type="SUPFAM" id="SSF48403">
    <property type="entry name" value="Ankyrin repeat"/>
    <property type="match status" value="1"/>
</dbReference>
<dbReference type="PROSITE" id="PS50297">
    <property type="entry name" value="ANK_REP_REGION"/>
    <property type="match status" value="1"/>
</dbReference>
<dbReference type="PROSITE" id="PS50088">
    <property type="entry name" value="ANK_REPEAT"/>
    <property type="match status" value="3"/>
</dbReference>
<keyword id="KW-0040">ANK repeat</keyword>
<keyword id="KW-0677">Repeat</keyword>
<organism>
    <name type="scientific">Rickettsia felis (strain ATCC VR-1525 / URRWXCal2)</name>
    <name type="common">Rickettsia azadi</name>
    <dbReference type="NCBI Taxonomy" id="315456"/>
    <lineage>
        <taxon>Bacteria</taxon>
        <taxon>Pseudomonadati</taxon>
        <taxon>Pseudomonadota</taxon>
        <taxon>Alphaproteobacteria</taxon>
        <taxon>Rickettsiales</taxon>
        <taxon>Rickettsiaceae</taxon>
        <taxon>Rickettsieae</taxon>
        <taxon>Rickettsia</taxon>
        <taxon>spotted fever group</taxon>
    </lineage>
</organism>
<protein>
    <recommendedName>
        <fullName>Putative ankyrin repeat protein RF_0939</fullName>
    </recommendedName>
</protein>
<accession>Q4UKY3</accession>